<name>PUT2H_RALN1</name>
<feature type="chain" id="PRO_0000460757" description="Putrescine 2-hydroxylase">
    <location>
        <begin position="1"/>
        <end position="365"/>
    </location>
</feature>
<feature type="domain" description="Rieske" evidence="1">
    <location>
        <begin position="44"/>
        <end position="141"/>
    </location>
</feature>
<feature type="binding site" evidence="1">
    <location>
        <position position="81"/>
    </location>
    <ligand>
        <name>[2Fe-2S] cluster</name>
        <dbReference type="ChEBI" id="CHEBI:190135"/>
    </ligand>
</feature>
<feature type="binding site" evidence="1">
    <location>
        <position position="83"/>
    </location>
    <ligand>
        <name>[2Fe-2S] cluster</name>
        <dbReference type="ChEBI" id="CHEBI:190135"/>
    </ligand>
</feature>
<feature type="binding site" evidence="1">
    <location>
        <position position="100"/>
    </location>
    <ligand>
        <name>[2Fe-2S] cluster</name>
        <dbReference type="ChEBI" id="CHEBI:190135"/>
    </ligand>
</feature>
<feature type="binding site" evidence="1">
    <location>
        <position position="103"/>
    </location>
    <ligand>
        <name>[2Fe-2S] cluster</name>
        <dbReference type="ChEBI" id="CHEBI:190135"/>
    </ligand>
</feature>
<gene>
    <name evidence="6" type="ordered locus">RSc2224</name>
    <name evidence="6" type="ORF">RS01375</name>
</gene>
<evidence type="ECO:0000255" key="1">
    <source>
        <dbReference type="PROSITE-ProRule" id="PRU00628"/>
    </source>
</evidence>
<evidence type="ECO:0000269" key="2">
    <source>
    </source>
</evidence>
<evidence type="ECO:0000303" key="3">
    <source>
    </source>
</evidence>
<evidence type="ECO:0000305" key="4"/>
<evidence type="ECO:0000305" key="5">
    <source>
    </source>
</evidence>
<evidence type="ECO:0000312" key="6">
    <source>
        <dbReference type="EMBL" id="CAD15931.1"/>
    </source>
</evidence>
<reference key="1">
    <citation type="journal article" date="2002" name="Nature">
        <title>Genome sequence of the plant pathogen Ralstonia solanacearum.</title>
        <authorList>
            <person name="Salanoubat M."/>
            <person name="Genin S."/>
            <person name="Artiguenave F."/>
            <person name="Gouzy J."/>
            <person name="Mangenot S."/>
            <person name="Arlat M."/>
            <person name="Billault A."/>
            <person name="Brottier P."/>
            <person name="Camus J.-C."/>
            <person name="Cattolico L."/>
            <person name="Chandler M."/>
            <person name="Choisne N."/>
            <person name="Claudel-Renard C."/>
            <person name="Cunnac S."/>
            <person name="Demange N."/>
            <person name="Gaspin C."/>
            <person name="Lavie M."/>
            <person name="Moisan A."/>
            <person name="Robert C."/>
            <person name="Saurin W."/>
            <person name="Schiex T."/>
            <person name="Siguier P."/>
            <person name="Thebault P."/>
            <person name="Whalen M."/>
            <person name="Wincker P."/>
            <person name="Levy M."/>
            <person name="Weissenbach J."/>
            <person name="Boucher C.A."/>
        </authorList>
    </citation>
    <scope>NUCLEOTIDE SEQUENCE [LARGE SCALE GENOMIC DNA]</scope>
    <source>
        <strain>ATCC BAA-1114 / GMI1000</strain>
    </source>
</reference>
<reference key="2">
    <citation type="journal article" date="2016" name="ACS Chem. Biol.">
        <title>Functional Identification of Putrescine C- and N-Hydroxylases.</title>
        <authorList>
            <person name="Li B."/>
            <person name="Lowe-Power T."/>
            <person name="Kurihara S."/>
            <person name="Gonzales S."/>
            <person name="Naidoo J."/>
            <person name="MacMillan J.B."/>
            <person name="Allen C."/>
            <person name="Michael A.J."/>
        </authorList>
    </citation>
    <scope>FUNCTION AS A PUTRESCINE 2-HYDROXYLASE</scope>
    <scope>DISRUPTION PHENOTYPE</scope>
</reference>
<organism>
    <name type="scientific">Ralstonia nicotianae (strain ATCC BAA-1114 / GMI1000)</name>
    <name type="common">Ralstonia solanacearum</name>
    <dbReference type="NCBI Taxonomy" id="267608"/>
    <lineage>
        <taxon>Bacteria</taxon>
        <taxon>Pseudomonadati</taxon>
        <taxon>Pseudomonadota</taxon>
        <taxon>Betaproteobacteria</taxon>
        <taxon>Burkholderiales</taxon>
        <taxon>Burkholderiaceae</taxon>
        <taxon>Ralstonia</taxon>
        <taxon>Ralstonia solanacearum species complex</taxon>
    </lineage>
</organism>
<keyword id="KW-0001">2Fe-2S</keyword>
<keyword id="KW-0408">Iron</keyword>
<keyword id="KW-0411">Iron-sulfur</keyword>
<keyword id="KW-0479">Metal-binding</keyword>
<keyword id="KW-0503">Monooxygenase</keyword>
<keyword id="KW-0560">Oxidoreductase</keyword>
<keyword id="KW-1185">Reference proteome</keyword>
<comment type="function">
    <text evidence="2 5">Rieske-type iron sulfur protein that can catalyze in vitro the 2-hydroxylation of putrescine, forming 2-hydroxyputrescine (PubMed:27541336). May be involved in the biosynthesis of the cyclic hydroxamate siderophore alcaligin (Probable).</text>
</comment>
<comment type="cofactor">
    <cofactor evidence="1">
        <name>[2Fe-2S] cluster</name>
        <dbReference type="ChEBI" id="CHEBI:190135"/>
    </cofactor>
    <text evidence="1">Binds 1 [2Fe-2S] cluster per subunit.</text>
</comment>
<comment type="disruption phenotype">
    <text evidence="2">Deletion of the gene abolishes the production of 2-hydroxyputrescine (PubMed:27541336). Depletion of 2-hydroxyputrescine has no discernible effect on growth of the deletion mutant (PubMed:27541336).</text>
</comment>
<comment type="similarity">
    <text evidence="4">Belongs to the bacterial ring-hydroxylating dioxygenase alpha subunit family.</text>
</comment>
<dbReference type="EC" id="1.14.-.-" evidence="5"/>
<dbReference type="EMBL" id="AL646052">
    <property type="protein sequence ID" value="CAD15931.1"/>
    <property type="molecule type" value="Genomic_DNA"/>
</dbReference>
<dbReference type="RefSeq" id="WP_011002152.1">
    <property type="nucleotide sequence ID" value="NC_003295.1"/>
</dbReference>
<dbReference type="SMR" id="Q8XX92"/>
<dbReference type="STRING" id="267608.RSc2224"/>
<dbReference type="EnsemblBacteria" id="CAD15931">
    <property type="protein sequence ID" value="CAD15931"/>
    <property type="gene ID" value="RSc2224"/>
</dbReference>
<dbReference type="KEGG" id="rso:RSc2224"/>
<dbReference type="PATRIC" id="fig|267608.8.peg.2263"/>
<dbReference type="eggNOG" id="COG4638">
    <property type="taxonomic scope" value="Bacteria"/>
</dbReference>
<dbReference type="HOGENOM" id="CLU_026244_3_0_4"/>
<dbReference type="Proteomes" id="UP000001436">
    <property type="component" value="Chromosome"/>
</dbReference>
<dbReference type="GO" id="GO:0051537">
    <property type="term" value="F:2 iron, 2 sulfur cluster binding"/>
    <property type="evidence" value="ECO:0007669"/>
    <property type="project" value="UniProtKB-KW"/>
</dbReference>
<dbReference type="GO" id="GO:0005506">
    <property type="term" value="F:iron ion binding"/>
    <property type="evidence" value="ECO:0007669"/>
    <property type="project" value="InterPro"/>
</dbReference>
<dbReference type="GO" id="GO:0004497">
    <property type="term" value="F:monooxygenase activity"/>
    <property type="evidence" value="ECO:0007669"/>
    <property type="project" value="UniProtKB-KW"/>
</dbReference>
<dbReference type="CDD" id="cd00680">
    <property type="entry name" value="RHO_alpha_C"/>
    <property type="match status" value="1"/>
</dbReference>
<dbReference type="CDD" id="cd03469">
    <property type="entry name" value="Rieske_RO_Alpha_N"/>
    <property type="match status" value="1"/>
</dbReference>
<dbReference type="Gene3D" id="3.90.380.10">
    <property type="entry name" value="Naphthalene 1,2-dioxygenase Alpha Subunit, Chain A, domain 1"/>
    <property type="match status" value="2"/>
</dbReference>
<dbReference type="Gene3D" id="2.102.10.10">
    <property type="entry name" value="Rieske [2Fe-2S] iron-sulphur domain"/>
    <property type="match status" value="1"/>
</dbReference>
<dbReference type="InterPro" id="IPR017941">
    <property type="entry name" value="Rieske_2Fe-2S"/>
</dbReference>
<dbReference type="InterPro" id="IPR036922">
    <property type="entry name" value="Rieske_2Fe-2S_sf"/>
</dbReference>
<dbReference type="InterPro" id="IPR015879">
    <property type="entry name" value="Ring_hydroxy_dOase_asu_C_dom"/>
</dbReference>
<dbReference type="InterPro" id="IPR001663">
    <property type="entry name" value="Rng_hydr_dOase-A"/>
</dbReference>
<dbReference type="PANTHER" id="PTHR43756">
    <property type="entry name" value="CHOLINE MONOOXYGENASE, CHLOROPLASTIC"/>
    <property type="match status" value="1"/>
</dbReference>
<dbReference type="PANTHER" id="PTHR43756:SF5">
    <property type="entry name" value="CHOLINE MONOOXYGENASE, CHLOROPLASTIC"/>
    <property type="match status" value="1"/>
</dbReference>
<dbReference type="Pfam" id="PF00355">
    <property type="entry name" value="Rieske"/>
    <property type="match status" value="1"/>
</dbReference>
<dbReference type="Pfam" id="PF00848">
    <property type="entry name" value="Ring_hydroxyl_A"/>
    <property type="match status" value="1"/>
</dbReference>
<dbReference type="PRINTS" id="PR00090">
    <property type="entry name" value="RNGDIOXGNASE"/>
</dbReference>
<dbReference type="SUPFAM" id="SSF55961">
    <property type="entry name" value="Bet v1-like"/>
    <property type="match status" value="1"/>
</dbReference>
<dbReference type="SUPFAM" id="SSF50022">
    <property type="entry name" value="ISP domain"/>
    <property type="match status" value="1"/>
</dbReference>
<dbReference type="PROSITE" id="PS51296">
    <property type="entry name" value="RIESKE"/>
    <property type="match status" value="1"/>
</dbReference>
<accession>Q8XX92</accession>
<protein>
    <recommendedName>
        <fullName evidence="3">Putrescine 2-hydroxylase</fullName>
        <ecNumber evidence="5">1.14.-.-</ecNumber>
    </recommendedName>
</protein>
<proteinExistence type="evidence at protein level"/>
<sequence length="365" mass="42216">MSNLSTALNLVPSETQLPVSAYFDEALYQTEIERLFKHGPSYVGHELMVPEVGDYHTLAAEAEGRVLVRNPNGVELLSNVCRHRQAIMLNGRGNAQNIVCPLHRWTYDLKGELLGAPHFERQPCVHLSRSLLQNWNGLLFEGKRDVRNDLARLGVARDLDFSGYMLDHVEVHDCDYNWKTFIEVYLEDYHVVPFHPGLGQFVSCDDLTWEFGEWYSVQTVGIHAGLRKPGTATYQKWHDAVLRFNNGEMPKYGAVWLTYYPNVMVEWYPNVLVVSTLHPMGPGKTRNVVEFYYPEEIVLFEREFVEAERAAYMETCIEDDEIAERMDAGRLALLRRGTSEVGPYQSPMEDGMQHFHEWYRRVMDY</sequence>